<comment type="function">
    <text evidence="1">Facilitates transcription termination by a mechanism that involves Rho binding to the nascent RNA, activation of Rho's RNA-dependent ATPase activity, and release of the mRNA from the DNA template.</text>
</comment>
<comment type="subunit">
    <text evidence="1">Homohexamer. The homohexamer assembles into an open ring structure.</text>
</comment>
<comment type="similarity">
    <text evidence="1">Belongs to the Rho family.</text>
</comment>
<reference key="1">
    <citation type="journal article" date="2003" name="Proc. Natl. Acad. Sci. U.S.A.">
        <title>Reductive genome evolution in Buchnera aphidicola.</title>
        <authorList>
            <person name="van Ham R.C.H.J."/>
            <person name="Kamerbeek J."/>
            <person name="Palacios C."/>
            <person name="Rausell C."/>
            <person name="Abascal F."/>
            <person name="Bastolla U."/>
            <person name="Fernandez J.M."/>
            <person name="Jimenez L."/>
            <person name="Postigo M."/>
            <person name="Silva F.J."/>
            <person name="Tamames J."/>
            <person name="Viguera E."/>
            <person name="Latorre A."/>
            <person name="Valencia A."/>
            <person name="Moran F."/>
            <person name="Moya A."/>
        </authorList>
    </citation>
    <scope>NUCLEOTIDE SEQUENCE [LARGE SCALE GENOMIC DNA]</scope>
    <source>
        <strain>Bp</strain>
    </source>
</reference>
<organism>
    <name type="scientific">Buchnera aphidicola subsp. Baizongia pistaciae (strain Bp)</name>
    <dbReference type="NCBI Taxonomy" id="224915"/>
    <lineage>
        <taxon>Bacteria</taxon>
        <taxon>Pseudomonadati</taxon>
        <taxon>Pseudomonadota</taxon>
        <taxon>Gammaproteobacteria</taxon>
        <taxon>Enterobacterales</taxon>
        <taxon>Erwiniaceae</taxon>
        <taxon>Buchnera</taxon>
    </lineage>
</organism>
<gene>
    <name evidence="1" type="primary">rho</name>
    <name type="ordered locus">bbp_538</name>
</gene>
<name>RHO_BUCBP</name>
<keyword id="KW-0067">ATP-binding</keyword>
<keyword id="KW-0347">Helicase</keyword>
<keyword id="KW-0378">Hydrolase</keyword>
<keyword id="KW-0547">Nucleotide-binding</keyword>
<keyword id="KW-1185">Reference proteome</keyword>
<keyword id="KW-0694">RNA-binding</keyword>
<keyword id="KW-0804">Transcription</keyword>
<keyword id="KW-0805">Transcription regulation</keyword>
<keyword id="KW-0806">Transcription termination</keyword>
<dbReference type="EC" id="3.6.4.-" evidence="1"/>
<dbReference type="EMBL" id="AE016826">
    <property type="protein sequence ID" value="AAO27237.1"/>
    <property type="molecule type" value="Genomic_DNA"/>
</dbReference>
<dbReference type="RefSeq" id="WP_011091638.1">
    <property type="nucleotide sequence ID" value="NC_004545.1"/>
</dbReference>
<dbReference type="SMR" id="Q89A22"/>
<dbReference type="STRING" id="224915.bbp_538"/>
<dbReference type="KEGG" id="bab:bbp_538"/>
<dbReference type="eggNOG" id="COG1158">
    <property type="taxonomic scope" value="Bacteria"/>
</dbReference>
<dbReference type="HOGENOM" id="CLU_016377_4_3_6"/>
<dbReference type="OrthoDB" id="9805197at2"/>
<dbReference type="Proteomes" id="UP000000601">
    <property type="component" value="Chromosome"/>
</dbReference>
<dbReference type="GO" id="GO:0005829">
    <property type="term" value="C:cytosol"/>
    <property type="evidence" value="ECO:0007669"/>
    <property type="project" value="UniProtKB-ARBA"/>
</dbReference>
<dbReference type="GO" id="GO:0005524">
    <property type="term" value="F:ATP binding"/>
    <property type="evidence" value="ECO:0007669"/>
    <property type="project" value="UniProtKB-UniRule"/>
</dbReference>
<dbReference type="GO" id="GO:0016887">
    <property type="term" value="F:ATP hydrolysis activity"/>
    <property type="evidence" value="ECO:0007669"/>
    <property type="project" value="InterPro"/>
</dbReference>
<dbReference type="GO" id="GO:0008186">
    <property type="term" value="F:ATP-dependent activity, acting on RNA"/>
    <property type="evidence" value="ECO:0007669"/>
    <property type="project" value="InterPro"/>
</dbReference>
<dbReference type="GO" id="GO:0004386">
    <property type="term" value="F:helicase activity"/>
    <property type="evidence" value="ECO:0007669"/>
    <property type="project" value="UniProtKB-UniRule"/>
</dbReference>
<dbReference type="GO" id="GO:0003723">
    <property type="term" value="F:RNA binding"/>
    <property type="evidence" value="ECO:0007669"/>
    <property type="project" value="UniProtKB-UniRule"/>
</dbReference>
<dbReference type="GO" id="GO:0006353">
    <property type="term" value="P:DNA-templated transcription termination"/>
    <property type="evidence" value="ECO:0007669"/>
    <property type="project" value="UniProtKB-UniRule"/>
</dbReference>
<dbReference type="CDD" id="cd04459">
    <property type="entry name" value="Rho_CSD"/>
    <property type="match status" value="1"/>
</dbReference>
<dbReference type="CDD" id="cd01128">
    <property type="entry name" value="rho_factor_C"/>
    <property type="match status" value="1"/>
</dbReference>
<dbReference type="FunFam" id="1.10.720.10:FF:000001">
    <property type="entry name" value="Transcription termination factor Rho"/>
    <property type="match status" value="1"/>
</dbReference>
<dbReference type="FunFam" id="2.40.50.140:FF:000010">
    <property type="entry name" value="Transcription termination factor Rho"/>
    <property type="match status" value="1"/>
</dbReference>
<dbReference type="FunFam" id="3.40.50.300:FF:000072">
    <property type="entry name" value="Transcription termination factor Rho"/>
    <property type="match status" value="1"/>
</dbReference>
<dbReference type="Gene3D" id="1.10.720.10">
    <property type="match status" value="1"/>
</dbReference>
<dbReference type="Gene3D" id="2.40.50.140">
    <property type="entry name" value="Nucleic acid-binding proteins"/>
    <property type="match status" value="1"/>
</dbReference>
<dbReference type="Gene3D" id="3.40.50.300">
    <property type="entry name" value="P-loop containing nucleotide triphosphate hydrolases"/>
    <property type="match status" value="1"/>
</dbReference>
<dbReference type="HAMAP" id="MF_01884">
    <property type="entry name" value="Rho"/>
    <property type="match status" value="1"/>
</dbReference>
<dbReference type="InterPro" id="IPR003593">
    <property type="entry name" value="AAA+_ATPase"/>
</dbReference>
<dbReference type="InterPro" id="IPR000194">
    <property type="entry name" value="ATPase_F1/V1/A1_a/bsu_nucl-bd"/>
</dbReference>
<dbReference type="InterPro" id="IPR011129">
    <property type="entry name" value="CSD"/>
</dbReference>
<dbReference type="InterPro" id="IPR012340">
    <property type="entry name" value="NA-bd_OB-fold"/>
</dbReference>
<dbReference type="InterPro" id="IPR027417">
    <property type="entry name" value="P-loop_NTPase"/>
</dbReference>
<dbReference type="InterPro" id="IPR011112">
    <property type="entry name" value="Rho-like_N"/>
</dbReference>
<dbReference type="InterPro" id="IPR041703">
    <property type="entry name" value="Rho_factor_ATP-bd"/>
</dbReference>
<dbReference type="InterPro" id="IPR036269">
    <property type="entry name" value="Rho_N_sf"/>
</dbReference>
<dbReference type="InterPro" id="IPR011113">
    <property type="entry name" value="Rho_RNA-bd"/>
</dbReference>
<dbReference type="InterPro" id="IPR004665">
    <property type="entry name" value="Term_rho"/>
</dbReference>
<dbReference type="NCBIfam" id="NF006886">
    <property type="entry name" value="PRK09376.1"/>
    <property type="match status" value="1"/>
</dbReference>
<dbReference type="NCBIfam" id="TIGR00767">
    <property type="entry name" value="rho"/>
    <property type="match status" value="1"/>
</dbReference>
<dbReference type="PANTHER" id="PTHR46425">
    <property type="entry name" value="TRANSCRIPTION TERMINATION FACTOR RHO"/>
    <property type="match status" value="1"/>
</dbReference>
<dbReference type="PANTHER" id="PTHR46425:SF1">
    <property type="entry name" value="TRANSCRIPTION TERMINATION FACTOR RHO"/>
    <property type="match status" value="1"/>
</dbReference>
<dbReference type="Pfam" id="PF00006">
    <property type="entry name" value="ATP-synt_ab"/>
    <property type="match status" value="1"/>
</dbReference>
<dbReference type="Pfam" id="PF07498">
    <property type="entry name" value="Rho_N"/>
    <property type="match status" value="1"/>
</dbReference>
<dbReference type="Pfam" id="PF07497">
    <property type="entry name" value="Rho_RNA_bind"/>
    <property type="match status" value="1"/>
</dbReference>
<dbReference type="SMART" id="SM00382">
    <property type="entry name" value="AAA"/>
    <property type="match status" value="1"/>
</dbReference>
<dbReference type="SMART" id="SM00357">
    <property type="entry name" value="CSP"/>
    <property type="match status" value="1"/>
</dbReference>
<dbReference type="SMART" id="SM00959">
    <property type="entry name" value="Rho_N"/>
    <property type="match status" value="1"/>
</dbReference>
<dbReference type="SUPFAM" id="SSF50249">
    <property type="entry name" value="Nucleic acid-binding proteins"/>
    <property type="match status" value="1"/>
</dbReference>
<dbReference type="SUPFAM" id="SSF52540">
    <property type="entry name" value="P-loop containing nucleoside triphosphate hydrolases"/>
    <property type="match status" value="1"/>
</dbReference>
<dbReference type="SUPFAM" id="SSF68912">
    <property type="entry name" value="Rho N-terminal domain-like"/>
    <property type="match status" value="1"/>
</dbReference>
<dbReference type="PROSITE" id="PS51856">
    <property type="entry name" value="RHO_RNA_BD"/>
    <property type="match status" value="1"/>
</dbReference>
<accession>Q89A22</accession>
<sequence length="419" mass="46971">MNLTALKNIPVSELIFLGDNAGLENLARMRKQDIIFSILKQHAKSGEDIFGDGVLEILQDGFGFLRSSDSSYLAGPDDIYVSPSQIRRFNLRTGDTISGKIRPPKEGERYFALLKVNKVNYDKPENARSKILFENLTPLHANSRLRMERGNGSTEDLTARVLDLASPIGRGQRGLIVAPPKAGKTMLLQNIAQSIAYNHPDCVLMVLLIDERPEEVTEMRRLVKGEVVASTFDEPSSRHVQVSEMVIEKAKRLVEHKKDVIILLDSITRLARAYNTVVPASGKVLTGGVDANALHRPKRFFGAARNVEEGGSLTIIATALIDTGSKMDEVIYEEFKGTGNMELPLSRKIAEKRVFPAIDYNRSGTRKEELLTKSDELQKMWILRKIIHPMSEIDAMEFLINKLAMTKTNNEFFDMMKRS</sequence>
<protein>
    <recommendedName>
        <fullName evidence="1">Transcription termination factor Rho</fullName>
        <ecNumber evidence="1">3.6.4.-</ecNumber>
    </recommendedName>
    <alternativeName>
        <fullName evidence="1">ATP-dependent helicase Rho</fullName>
    </alternativeName>
</protein>
<proteinExistence type="inferred from homology"/>
<feature type="chain" id="PRO_0000188959" description="Transcription termination factor Rho">
    <location>
        <begin position="1"/>
        <end position="419"/>
    </location>
</feature>
<feature type="domain" description="Rho RNA-BD" evidence="2">
    <location>
        <begin position="48"/>
        <end position="123"/>
    </location>
</feature>
<feature type="region of interest" description="RNA-binding 1" evidence="1">
    <location>
        <begin position="61"/>
        <end position="66"/>
    </location>
</feature>
<feature type="region of interest" description="RNA-binding 1" evidence="1">
    <location>
        <begin position="78"/>
        <end position="80"/>
    </location>
</feature>
<feature type="region of interest" description="RNA-binding 1" evidence="1">
    <location>
        <begin position="108"/>
        <end position="110"/>
    </location>
</feature>
<feature type="region of interest" description="RNA-binding 2" evidence="1">
    <location>
        <begin position="284"/>
        <end position="288"/>
    </location>
</feature>
<feature type="binding site" evidence="1">
    <location>
        <begin position="169"/>
        <end position="174"/>
    </location>
    <ligand>
        <name>ATP</name>
        <dbReference type="ChEBI" id="CHEBI:30616"/>
    </ligand>
</feature>
<feature type="binding site" evidence="1">
    <location>
        <begin position="181"/>
        <end position="186"/>
    </location>
    <ligand>
        <name>ATP</name>
        <dbReference type="ChEBI" id="CHEBI:30616"/>
    </ligand>
</feature>
<feature type="binding site" evidence="1">
    <location>
        <position position="212"/>
    </location>
    <ligand>
        <name>ATP</name>
        <dbReference type="ChEBI" id="CHEBI:30616"/>
    </ligand>
</feature>
<feature type="site" description="RNA-binding 2" evidence="1">
    <location>
        <position position="326"/>
    </location>
</feature>
<evidence type="ECO:0000255" key="1">
    <source>
        <dbReference type="HAMAP-Rule" id="MF_01884"/>
    </source>
</evidence>
<evidence type="ECO:0000255" key="2">
    <source>
        <dbReference type="PROSITE-ProRule" id="PRU01203"/>
    </source>
</evidence>